<organism>
    <name type="scientific">Lophura leucomelanos</name>
    <name type="common">Kalij pheasant</name>
    <dbReference type="NCBI Taxonomy" id="140445"/>
    <lineage>
        <taxon>Eukaryota</taxon>
        <taxon>Metazoa</taxon>
        <taxon>Chordata</taxon>
        <taxon>Craniata</taxon>
        <taxon>Vertebrata</taxon>
        <taxon>Euteleostomi</taxon>
        <taxon>Archelosauria</taxon>
        <taxon>Archosauria</taxon>
        <taxon>Dinosauria</taxon>
        <taxon>Saurischia</taxon>
        <taxon>Theropoda</taxon>
        <taxon>Coelurosauria</taxon>
        <taxon>Aves</taxon>
        <taxon>Neognathae</taxon>
        <taxon>Galloanserae</taxon>
        <taxon>Galliformes</taxon>
        <taxon>Phasianidae</taxon>
        <taxon>Phasianinae</taxon>
        <taxon>Lophura</taxon>
    </lineage>
</organism>
<accession>P24364</accession>
<feature type="chain" id="PRO_0000208867" description="Lysozyme C">
    <location>
        <begin position="1"/>
        <end position="129"/>
    </location>
</feature>
<feature type="domain" description="C-type lysozyme" evidence="1">
    <location>
        <begin position="1"/>
        <end position="129"/>
    </location>
</feature>
<feature type="active site" evidence="1">
    <location>
        <position position="35"/>
    </location>
</feature>
<feature type="active site" evidence="1">
    <location>
        <position position="52"/>
    </location>
</feature>
<feature type="disulfide bond" evidence="1">
    <location>
        <begin position="6"/>
        <end position="127"/>
    </location>
</feature>
<feature type="disulfide bond" evidence="1">
    <location>
        <begin position="30"/>
        <end position="115"/>
    </location>
</feature>
<feature type="disulfide bond" evidence="1">
    <location>
        <begin position="64"/>
        <end position="80"/>
    </location>
</feature>
<feature type="disulfide bond" evidence="1">
    <location>
        <begin position="76"/>
        <end position="94"/>
    </location>
</feature>
<proteinExistence type="evidence at protein level"/>
<keyword id="KW-0929">Antimicrobial</keyword>
<keyword id="KW-0081">Bacteriolytic enzyme</keyword>
<keyword id="KW-0903">Direct protein sequencing</keyword>
<keyword id="KW-1015">Disulfide bond</keyword>
<keyword id="KW-0326">Glycosidase</keyword>
<keyword id="KW-0378">Hydrolase</keyword>
<keyword id="KW-0964">Secreted</keyword>
<dbReference type="EC" id="3.2.1.17"/>
<dbReference type="PIR" id="JQ1033">
    <property type="entry name" value="JQ1033"/>
</dbReference>
<dbReference type="SMR" id="P24364"/>
<dbReference type="CAZy" id="GH22">
    <property type="family name" value="Glycoside Hydrolase Family 22"/>
</dbReference>
<dbReference type="GO" id="GO:0005576">
    <property type="term" value="C:extracellular region"/>
    <property type="evidence" value="ECO:0007669"/>
    <property type="project" value="UniProtKB-SubCell"/>
</dbReference>
<dbReference type="GO" id="GO:0003796">
    <property type="term" value="F:lysozyme activity"/>
    <property type="evidence" value="ECO:0007669"/>
    <property type="project" value="UniProtKB-EC"/>
</dbReference>
<dbReference type="GO" id="GO:0050829">
    <property type="term" value="P:defense response to Gram-negative bacterium"/>
    <property type="evidence" value="ECO:0007669"/>
    <property type="project" value="TreeGrafter"/>
</dbReference>
<dbReference type="GO" id="GO:0050830">
    <property type="term" value="P:defense response to Gram-positive bacterium"/>
    <property type="evidence" value="ECO:0007669"/>
    <property type="project" value="TreeGrafter"/>
</dbReference>
<dbReference type="GO" id="GO:0031640">
    <property type="term" value="P:killing of cells of another organism"/>
    <property type="evidence" value="ECO:0007669"/>
    <property type="project" value="UniProtKB-KW"/>
</dbReference>
<dbReference type="CDD" id="cd16897">
    <property type="entry name" value="LYZ_C"/>
    <property type="match status" value="1"/>
</dbReference>
<dbReference type="FunFam" id="1.10.530.10:FF:000001">
    <property type="entry name" value="Lysozyme C"/>
    <property type="match status" value="1"/>
</dbReference>
<dbReference type="Gene3D" id="1.10.530.10">
    <property type="match status" value="1"/>
</dbReference>
<dbReference type="InterPro" id="IPR001916">
    <property type="entry name" value="Glyco_hydro_22"/>
</dbReference>
<dbReference type="InterPro" id="IPR019799">
    <property type="entry name" value="Glyco_hydro_22_CS"/>
</dbReference>
<dbReference type="InterPro" id="IPR000974">
    <property type="entry name" value="Glyco_hydro_22_lys"/>
</dbReference>
<dbReference type="InterPro" id="IPR023346">
    <property type="entry name" value="Lysozyme-like_dom_sf"/>
</dbReference>
<dbReference type="PANTHER" id="PTHR11407">
    <property type="entry name" value="LYSOZYME C"/>
    <property type="match status" value="1"/>
</dbReference>
<dbReference type="PANTHER" id="PTHR11407:SF28">
    <property type="entry name" value="LYSOZYME C"/>
    <property type="match status" value="1"/>
</dbReference>
<dbReference type="Pfam" id="PF00062">
    <property type="entry name" value="Lys"/>
    <property type="match status" value="1"/>
</dbReference>
<dbReference type="PRINTS" id="PR00137">
    <property type="entry name" value="LYSOZYME"/>
</dbReference>
<dbReference type="PRINTS" id="PR00135">
    <property type="entry name" value="LYZLACT"/>
</dbReference>
<dbReference type="SMART" id="SM00263">
    <property type="entry name" value="LYZ1"/>
    <property type="match status" value="1"/>
</dbReference>
<dbReference type="SUPFAM" id="SSF53955">
    <property type="entry name" value="Lysozyme-like"/>
    <property type="match status" value="1"/>
</dbReference>
<dbReference type="PROSITE" id="PS00128">
    <property type="entry name" value="GLYCOSYL_HYDROL_F22_1"/>
    <property type="match status" value="1"/>
</dbReference>
<dbReference type="PROSITE" id="PS51348">
    <property type="entry name" value="GLYCOSYL_HYDROL_F22_2"/>
    <property type="match status" value="1"/>
</dbReference>
<protein>
    <recommendedName>
        <fullName>Lysozyme C</fullName>
        <ecNumber>3.2.1.17</ecNumber>
    </recommendedName>
    <alternativeName>
        <fullName>1,4-beta-N-acetylmuramidase</fullName>
    </alternativeName>
</protein>
<reference key="1">
    <citation type="journal article" date="1991" name="Agric. Biol. Chem.">
        <title>The amino acid sequence of lysozyme from kalij pheasant (Lophura leucomelana) egg-white.</title>
        <authorList>
            <person name="Araki T."/>
            <person name="Kudo K."/>
            <person name="Kuramoto M."/>
            <person name="Torikata T."/>
        </authorList>
    </citation>
    <scope>PROTEIN SEQUENCE</scope>
    <source>
        <tissue>Egg white</tissue>
    </source>
</reference>
<evidence type="ECO:0000255" key="1">
    <source>
        <dbReference type="PROSITE-ProRule" id="PRU00680"/>
    </source>
</evidence>
<sequence>KVYGRCELAAAMKRLGLDNYRGYSLGNWVCAAKYESNFNTHATNRNTDGSTDYGILQINSRWWCNDGKTPGSRNLCHIPCSALLSSDITASVNCAKKIVSDGNGMNAWVAWRNRCKGTDVSVWTRGCRL</sequence>
<comment type="function">
    <text>Lysozymes have primarily a bacteriolytic function; those in tissues and body fluids are associated with the monocyte-macrophage system and enhance the activity of immunoagents.</text>
</comment>
<comment type="catalytic activity">
    <reaction>
        <text>Hydrolysis of (1-&gt;4)-beta-linkages between N-acetylmuramic acid and N-acetyl-D-glucosamine residues in a peptidoglycan and between N-acetyl-D-glucosamine residues in chitodextrins.</text>
        <dbReference type="EC" id="3.2.1.17"/>
    </reaction>
</comment>
<comment type="subunit">
    <text>Monomer.</text>
</comment>
<comment type="subcellular location">
    <subcellularLocation>
        <location>Secreted</location>
    </subcellularLocation>
</comment>
<comment type="miscellaneous">
    <text>Lysozyme C is capable of both hydrolysis and transglycosylation; it also shows a slight esterase activity. It acts rapidly on both peptide-substituted and unsubstituted peptidoglycan, and slowly on chitin oligosaccharides.</text>
</comment>
<comment type="similarity">
    <text evidence="1">Belongs to the glycosyl hydrolase 22 family.</text>
</comment>
<name>LYSC_LOPLE</name>
<gene>
    <name type="primary">LYZ</name>
</gene>